<accession>B8ZKX7</accession>
<gene>
    <name evidence="1" type="primary">nadE</name>
    <name type="ordered locus">SPN23F13840</name>
</gene>
<organism>
    <name type="scientific">Streptococcus pneumoniae (strain ATCC 700669 / Spain 23F-1)</name>
    <dbReference type="NCBI Taxonomy" id="561276"/>
    <lineage>
        <taxon>Bacteria</taxon>
        <taxon>Bacillati</taxon>
        <taxon>Bacillota</taxon>
        <taxon>Bacilli</taxon>
        <taxon>Lactobacillales</taxon>
        <taxon>Streptococcaceae</taxon>
        <taxon>Streptococcus</taxon>
    </lineage>
</organism>
<feature type="chain" id="PRO_1000191509" description="NH(3)-dependent NAD(+) synthetase">
    <location>
        <begin position="1"/>
        <end position="274"/>
    </location>
</feature>
<feature type="binding site" evidence="1">
    <location>
        <begin position="46"/>
        <end position="53"/>
    </location>
    <ligand>
        <name>ATP</name>
        <dbReference type="ChEBI" id="CHEBI:30616"/>
    </ligand>
</feature>
<feature type="binding site" evidence="1">
    <location>
        <position position="52"/>
    </location>
    <ligand>
        <name>Mg(2+)</name>
        <dbReference type="ChEBI" id="CHEBI:18420"/>
    </ligand>
</feature>
<feature type="binding site" evidence="1">
    <location>
        <position position="140"/>
    </location>
    <ligand>
        <name>deamido-NAD(+)</name>
        <dbReference type="ChEBI" id="CHEBI:58437"/>
    </ligand>
</feature>
<feature type="binding site" evidence="1">
    <location>
        <position position="160"/>
    </location>
    <ligand>
        <name>ATP</name>
        <dbReference type="ChEBI" id="CHEBI:30616"/>
    </ligand>
</feature>
<feature type="binding site" evidence="1">
    <location>
        <position position="165"/>
    </location>
    <ligand>
        <name>Mg(2+)</name>
        <dbReference type="ChEBI" id="CHEBI:18420"/>
    </ligand>
</feature>
<feature type="binding site" evidence="1">
    <location>
        <position position="173"/>
    </location>
    <ligand>
        <name>deamido-NAD(+)</name>
        <dbReference type="ChEBI" id="CHEBI:58437"/>
    </ligand>
</feature>
<feature type="binding site" evidence="1">
    <location>
        <position position="180"/>
    </location>
    <ligand>
        <name>deamido-NAD(+)</name>
        <dbReference type="ChEBI" id="CHEBI:58437"/>
    </ligand>
</feature>
<feature type="binding site" evidence="1">
    <location>
        <position position="189"/>
    </location>
    <ligand>
        <name>ATP</name>
        <dbReference type="ChEBI" id="CHEBI:30616"/>
    </ligand>
</feature>
<feature type="binding site" evidence="1">
    <location>
        <position position="211"/>
    </location>
    <ligand>
        <name>ATP</name>
        <dbReference type="ChEBI" id="CHEBI:30616"/>
    </ligand>
</feature>
<feature type="binding site" evidence="1">
    <location>
        <begin position="260"/>
        <end position="261"/>
    </location>
    <ligand>
        <name>deamido-NAD(+)</name>
        <dbReference type="ChEBI" id="CHEBI:58437"/>
    </ligand>
</feature>
<sequence length="274" mass="30135">MSLQETIIQELGVKPVIDAQEEIRRSIDFLKRYLKKHPFLKTFVLGISGGQDSTLAGRLAQLAMEELRAETGDDSYKFIAVRLPYGVQADEADAQKALAFIQPDVSLVVNIKESADAMTAAVEATGSPVSDFNKGNIKARCRMIAQYALAGSHSGAVIGTDHAAENITGFFTKFGDGGADILPLYRLNKRQGKQLLQKLGAEPALYEKIPTADLEEDKPGLADEVALGVTYAEIDDYLEGKTISPEAQATIENWWHKGQHKRHLPITVFDDFWE</sequence>
<comment type="function">
    <text evidence="1">Catalyzes the ATP-dependent amidation of deamido-NAD to form NAD. Uses ammonia as a nitrogen source.</text>
</comment>
<comment type="catalytic activity">
    <reaction evidence="1">
        <text>deamido-NAD(+) + NH4(+) + ATP = AMP + diphosphate + NAD(+) + H(+)</text>
        <dbReference type="Rhea" id="RHEA:21188"/>
        <dbReference type="ChEBI" id="CHEBI:15378"/>
        <dbReference type="ChEBI" id="CHEBI:28938"/>
        <dbReference type="ChEBI" id="CHEBI:30616"/>
        <dbReference type="ChEBI" id="CHEBI:33019"/>
        <dbReference type="ChEBI" id="CHEBI:57540"/>
        <dbReference type="ChEBI" id="CHEBI:58437"/>
        <dbReference type="ChEBI" id="CHEBI:456215"/>
        <dbReference type="EC" id="6.3.1.5"/>
    </reaction>
</comment>
<comment type="pathway">
    <text evidence="1">Cofactor biosynthesis; NAD(+) biosynthesis; NAD(+) from deamido-NAD(+) (ammonia route): step 1/1.</text>
</comment>
<comment type="subunit">
    <text evidence="1">Homodimer.</text>
</comment>
<comment type="similarity">
    <text evidence="1">Belongs to the NAD synthetase family.</text>
</comment>
<evidence type="ECO:0000255" key="1">
    <source>
        <dbReference type="HAMAP-Rule" id="MF_00193"/>
    </source>
</evidence>
<protein>
    <recommendedName>
        <fullName evidence="1">NH(3)-dependent NAD(+) synthetase</fullName>
        <ecNumber evidence="1">6.3.1.5</ecNumber>
    </recommendedName>
</protein>
<name>NADE_STRPJ</name>
<reference key="1">
    <citation type="journal article" date="2009" name="J. Bacteriol.">
        <title>Role of conjugative elements in the evolution of the multidrug-resistant pandemic clone Streptococcus pneumoniae Spain23F ST81.</title>
        <authorList>
            <person name="Croucher N.J."/>
            <person name="Walker D."/>
            <person name="Romero P."/>
            <person name="Lennard N."/>
            <person name="Paterson G.K."/>
            <person name="Bason N.C."/>
            <person name="Mitchell A.M."/>
            <person name="Quail M.A."/>
            <person name="Andrew P.W."/>
            <person name="Parkhill J."/>
            <person name="Bentley S.D."/>
            <person name="Mitchell T.J."/>
        </authorList>
    </citation>
    <scope>NUCLEOTIDE SEQUENCE [LARGE SCALE GENOMIC DNA]</scope>
    <source>
        <strain>ATCC 700669 / Spain 23F-1</strain>
    </source>
</reference>
<dbReference type="EC" id="6.3.1.5" evidence="1"/>
<dbReference type="EMBL" id="FM211187">
    <property type="protein sequence ID" value="CAR69183.1"/>
    <property type="molecule type" value="Genomic_DNA"/>
</dbReference>
<dbReference type="RefSeq" id="WP_000058033.1">
    <property type="nucleotide sequence ID" value="NC_011900.1"/>
</dbReference>
<dbReference type="SMR" id="B8ZKX7"/>
<dbReference type="GeneID" id="45653323"/>
<dbReference type="KEGG" id="sne:SPN23F13840"/>
<dbReference type="HOGENOM" id="CLU_059327_3_0_9"/>
<dbReference type="UniPathway" id="UPA00253">
    <property type="reaction ID" value="UER00333"/>
</dbReference>
<dbReference type="GO" id="GO:0005737">
    <property type="term" value="C:cytoplasm"/>
    <property type="evidence" value="ECO:0007669"/>
    <property type="project" value="InterPro"/>
</dbReference>
<dbReference type="GO" id="GO:0005524">
    <property type="term" value="F:ATP binding"/>
    <property type="evidence" value="ECO:0007669"/>
    <property type="project" value="UniProtKB-UniRule"/>
</dbReference>
<dbReference type="GO" id="GO:0004359">
    <property type="term" value="F:glutaminase activity"/>
    <property type="evidence" value="ECO:0007669"/>
    <property type="project" value="InterPro"/>
</dbReference>
<dbReference type="GO" id="GO:0046872">
    <property type="term" value="F:metal ion binding"/>
    <property type="evidence" value="ECO:0007669"/>
    <property type="project" value="UniProtKB-KW"/>
</dbReference>
<dbReference type="GO" id="GO:0003952">
    <property type="term" value="F:NAD+ synthase (glutamine-hydrolyzing) activity"/>
    <property type="evidence" value="ECO:0007669"/>
    <property type="project" value="InterPro"/>
</dbReference>
<dbReference type="GO" id="GO:0008795">
    <property type="term" value="F:NAD+ synthase activity"/>
    <property type="evidence" value="ECO:0007669"/>
    <property type="project" value="UniProtKB-UniRule"/>
</dbReference>
<dbReference type="GO" id="GO:0009435">
    <property type="term" value="P:NAD biosynthetic process"/>
    <property type="evidence" value="ECO:0007669"/>
    <property type="project" value="UniProtKB-UniRule"/>
</dbReference>
<dbReference type="CDD" id="cd00553">
    <property type="entry name" value="NAD_synthase"/>
    <property type="match status" value="1"/>
</dbReference>
<dbReference type="FunFam" id="3.40.50.620:FF:000015">
    <property type="entry name" value="NH(3)-dependent NAD(+) synthetase"/>
    <property type="match status" value="1"/>
</dbReference>
<dbReference type="Gene3D" id="3.40.50.620">
    <property type="entry name" value="HUPs"/>
    <property type="match status" value="1"/>
</dbReference>
<dbReference type="HAMAP" id="MF_00193">
    <property type="entry name" value="NadE_ammonia_dep"/>
    <property type="match status" value="1"/>
</dbReference>
<dbReference type="InterPro" id="IPR022310">
    <property type="entry name" value="NAD/GMP_synthase"/>
</dbReference>
<dbReference type="InterPro" id="IPR003694">
    <property type="entry name" value="NAD_synthase"/>
</dbReference>
<dbReference type="InterPro" id="IPR022926">
    <property type="entry name" value="NH(3)-dep_NAD(+)_synth"/>
</dbReference>
<dbReference type="InterPro" id="IPR014729">
    <property type="entry name" value="Rossmann-like_a/b/a_fold"/>
</dbReference>
<dbReference type="NCBIfam" id="TIGR00552">
    <property type="entry name" value="nadE"/>
    <property type="match status" value="1"/>
</dbReference>
<dbReference type="NCBIfam" id="NF001979">
    <property type="entry name" value="PRK00768.1"/>
    <property type="match status" value="1"/>
</dbReference>
<dbReference type="PANTHER" id="PTHR23090">
    <property type="entry name" value="NH 3 /GLUTAMINE-DEPENDENT NAD + SYNTHETASE"/>
    <property type="match status" value="1"/>
</dbReference>
<dbReference type="PANTHER" id="PTHR23090:SF7">
    <property type="entry name" value="NH(3)-DEPENDENT NAD(+) SYNTHETASE"/>
    <property type="match status" value="1"/>
</dbReference>
<dbReference type="Pfam" id="PF02540">
    <property type="entry name" value="NAD_synthase"/>
    <property type="match status" value="1"/>
</dbReference>
<dbReference type="SUPFAM" id="SSF52402">
    <property type="entry name" value="Adenine nucleotide alpha hydrolases-like"/>
    <property type="match status" value="1"/>
</dbReference>
<proteinExistence type="inferred from homology"/>
<keyword id="KW-0067">ATP-binding</keyword>
<keyword id="KW-0436">Ligase</keyword>
<keyword id="KW-0460">Magnesium</keyword>
<keyword id="KW-0479">Metal-binding</keyword>
<keyword id="KW-0520">NAD</keyword>
<keyword id="KW-0547">Nucleotide-binding</keyword>